<proteinExistence type="uncertain"/>
<dbReference type="EMBL" id="AE005674">
    <property type="protein sequence ID" value="AAN44832.2"/>
    <property type="status" value="ALT_INIT"/>
    <property type="molecule type" value="Genomic_DNA"/>
</dbReference>
<dbReference type="EMBL" id="AE014073">
    <property type="protein sequence ID" value="AAP19346.1"/>
    <property type="status" value="ALT_INIT"/>
    <property type="molecule type" value="Genomic_DNA"/>
</dbReference>
<dbReference type="SMR" id="Q83PY0"/>
<dbReference type="STRING" id="198214.SF3369"/>
<dbReference type="PaxDb" id="198214-SF3369"/>
<dbReference type="KEGG" id="sfx:S4394"/>
<dbReference type="PATRIC" id="fig|623.156.peg.1867"/>
<dbReference type="HOGENOM" id="CLU_005126_9_3_6"/>
<dbReference type="Proteomes" id="UP000001006">
    <property type="component" value="Chromosome"/>
</dbReference>
<dbReference type="Proteomes" id="UP000002673">
    <property type="component" value="Chromosome"/>
</dbReference>
<dbReference type="GO" id="GO:0005886">
    <property type="term" value="C:plasma membrane"/>
    <property type="evidence" value="ECO:0007669"/>
    <property type="project" value="UniProtKB-SubCell"/>
</dbReference>
<dbReference type="GO" id="GO:0015503">
    <property type="term" value="F:glutathione-regulated potassium exporter activity"/>
    <property type="evidence" value="ECO:0007669"/>
    <property type="project" value="UniProtKB-UniRule"/>
</dbReference>
<dbReference type="GO" id="GO:1902600">
    <property type="term" value="P:proton transmembrane transport"/>
    <property type="evidence" value="ECO:0007669"/>
    <property type="project" value="InterPro"/>
</dbReference>
<dbReference type="FunFam" id="1.20.1530.20:FF:000001">
    <property type="entry name" value="Glutathione-regulated potassium-efflux system protein KefB"/>
    <property type="match status" value="1"/>
</dbReference>
<dbReference type="FunFam" id="3.40.50.720:FF:000036">
    <property type="entry name" value="Glutathione-regulated potassium-efflux system protein KefB"/>
    <property type="match status" value="1"/>
</dbReference>
<dbReference type="Gene3D" id="1.20.1530.20">
    <property type="match status" value="1"/>
</dbReference>
<dbReference type="Gene3D" id="3.40.50.720">
    <property type="entry name" value="NAD(P)-binding Rossmann-like Domain"/>
    <property type="match status" value="1"/>
</dbReference>
<dbReference type="HAMAP" id="MF_01412">
    <property type="entry name" value="K_H_efflux_KefB"/>
    <property type="match status" value="1"/>
</dbReference>
<dbReference type="InterPro" id="IPR006153">
    <property type="entry name" value="Cation/H_exchanger_TM"/>
</dbReference>
<dbReference type="InterPro" id="IPR004771">
    <property type="entry name" value="K/H_exchanger"/>
</dbReference>
<dbReference type="InterPro" id="IPR020884">
    <property type="entry name" value="K_H_efflux_KefB"/>
</dbReference>
<dbReference type="InterPro" id="IPR006036">
    <property type="entry name" value="K_uptake_TrkA"/>
</dbReference>
<dbReference type="InterPro" id="IPR038770">
    <property type="entry name" value="Na+/solute_symporter_sf"/>
</dbReference>
<dbReference type="InterPro" id="IPR036291">
    <property type="entry name" value="NAD(P)-bd_dom_sf"/>
</dbReference>
<dbReference type="InterPro" id="IPR003148">
    <property type="entry name" value="RCK_N"/>
</dbReference>
<dbReference type="NCBIfam" id="TIGR00932">
    <property type="entry name" value="2a37"/>
    <property type="match status" value="1"/>
</dbReference>
<dbReference type="NCBIfam" id="NF002973">
    <property type="entry name" value="PRK03659.1"/>
    <property type="match status" value="1"/>
</dbReference>
<dbReference type="PANTHER" id="PTHR46157">
    <property type="entry name" value="K(+) EFFLUX ANTIPORTER 3, CHLOROPLASTIC"/>
    <property type="match status" value="1"/>
</dbReference>
<dbReference type="PANTHER" id="PTHR46157:SF4">
    <property type="entry name" value="K(+) EFFLUX ANTIPORTER 3, CHLOROPLASTIC"/>
    <property type="match status" value="1"/>
</dbReference>
<dbReference type="Pfam" id="PF00999">
    <property type="entry name" value="Na_H_Exchanger"/>
    <property type="match status" value="1"/>
</dbReference>
<dbReference type="Pfam" id="PF02254">
    <property type="entry name" value="TrkA_N"/>
    <property type="match status" value="1"/>
</dbReference>
<dbReference type="PRINTS" id="PR00335">
    <property type="entry name" value="KUPTAKETRKA"/>
</dbReference>
<dbReference type="SUPFAM" id="SSF51735">
    <property type="entry name" value="NAD(P)-binding Rossmann-fold domains"/>
    <property type="match status" value="1"/>
</dbReference>
<dbReference type="PROSITE" id="PS51201">
    <property type="entry name" value="RCK_N"/>
    <property type="match status" value="1"/>
</dbReference>
<reference key="1">
    <citation type="journal article" date="2002" name="Nucleic Acids Res.">
        <title>Genome sequence of Shigella flexneri 2a: insights into pathogenicity through comparison with genomes of Escherichia coli K12 and O157.</title>
        <authorList>
            <person name="Jin Q."/>
            <person name="Yuan Z."/>
            <person name="Xu J."/>
            <person name="Wang Y."/>
            <person name="Shen Y."/>
            <person name="Lu W."/>
            <person name="Wang J."/>
            <person name="Liu H."/>
            <person name="Yang J."/>
            <person name="Yang F."/>
            <person name="Zhang X."/>
            <person name="Zhang J."/>
            <person name="Yang G."/>
            <person name="Wu H."/>
            <person name="Qu D."/>
            <person name="Dong J."/>
            <person name="Sun L."/>
            <person name="Xue Y."/>
            <person name="Zhao A."/>
            <person name="Gao Y."/>
            <person name="Zhu J."/>
            <person name="Kan B."/>
            <person name="Ding K."/>
            <person name="Chen S."/>
            <person name="Cheng H."/>
            <person name="Yao Z."/>
            <person name="He B."/>
            <person name="Chen R."/>
            <person name="Ma D."/>
            <person name="Qiang B."/>
            <person name="Wen Y."/>
            <person name="Hou Y."/>
            <person name="Yu J."/>
        </authorList>
    </citation>
    <scope>NUCLEOTIDE SEQUENCE [LARGE SCALE GENOMIC DNA]</scope>
    <source>
        <strain>301 / Serotype 2a</strain>
    </source>
</reference>
<reference key="2">
    <citation type="journal article" date="2003" name="Infect. Immun.">
        <title>Complete genome sequence and comparative genomics of Shigella flexneri serotype 2a strain 2457T.</title>
        <authorList>
            <person name="Wei J."/>
            <person name="Goldberg M.B."/>
            <person name="Burland V."/>
            <person name="Venkatesan M.M."/>
            <person name="Deng W."/>
            <person name="Fournier G."/>
            <person name="Mayhew G.F."/>
            <person name="Plunkett G. III"/>
            <person name="Rose D.J."/>
            <person name="Darling A."/>
            <person name="Mau B."/>
            <person name="Perna N.T."/>
            <person name="Payne S.M."/>
            <person name="Runyen-Janecky L.J."/>
            <person name="Zhou S."/>
            <person name="Schwartz D.C."/>
            <person name="Blattner F.R."/>
        </authorList>
    </citation>
    <scope>NUCLEOTIDE SEQUENCE [LARGE SCALE GENOMIC DNA]</scope>
    <source>
        <strain>ATCC 700930 / 2457T / Serotype 2a</strain>
    </source>
</reference>
<organism>
    <name type="scientific">Shigella flexneri</name>
    <dbReference type="NCBI Taxonomy" id="623"/>
    <lineage>
        <taxon>Bacteria</taxon>
        <taxon>Pseudomonadati</taxon>
        <taxon>Pseudomonadota</taxon>
        <taxon>Gammaproteobacteria</taxon>
        <taxon>Enterobacterales</taxon>
        <taxon>Enterobacteriaceae</taxon>
        <taxon>Shigella</taxon>
    </lineage>
</organism>
<feature type="chain" id="PRO_0000196603" description="Putative glutathione-regulated potassium-efflux system protein KefB">
    <location>
        <begin position="1"/>
        <end position="557"/>
    </location>
</feature>
<feature type="transmembrane region" description="Helical" evidence="1">
    <location>
        <begin position="2"/>
        <end position="22"/>
    </location>
</feature>
<feature type="transmembrane region" description="Helical" evidence="1">
    <location>
        <begin position="24"/>
        <end position="44"/>
    </location>
</feature>
<feature type="transmembrane region" description="Helical" evidence="1">
    <location>
        <begin position="56"/>
        <end position="76"/>
    </location>
</feature>
<feature type="transmembrane region" description="Helical" evidence="1">
    <location>
        <begin position="84"/>
        <end position="104"/>
    </location>
</feature>
<feature type="transmembrane region" description="Helical" evidence="1">
    <location>
        <begin position="121"/>
        <end position="141"/>
    </location>
</feature>
<feature type="transmembrane region" description="Helical" evidence="1">
    <location>
        <begin position="146"/>
        <end position="166"/>
    </location>
</feature>
<feature type="transmembrane region" description="Helical" evidence="1">
    <location>
        <begin position="176"/>
        <end position="196"/>
    </location>
</feature>
<feature type="transmembrane region" description="Helical" evidence="1">
    <location>
        <begin position="199"/>
        <end position="219"/>
    </location>
</feature>
<feature type="transmembrane region" description="Helical" evidence="1">
    <location>
        <begin position="237"/>
        <end position="257"/>
    </location>
</feature>
<feature type="transmembrane region" description="Helical" evidence="1">
    <location>
        <begin position="260"/>
        <end position="280"/>
    </location>
</feature>
<feature type="domain" description="RCK N-terminal" evidence="2">
    <location>
        <begin position="356"/>
        <end position="475"/>
    </location>
</feature>
<sequence>MLGYLLAGIAIGPWGLGFISDVDEILHFSELGVVFLMFIIGLELNPSKLWQLRRSIFGVGAAQVLLSAALLAGLLMLTDFAWQAAVVGGIGFAMSSTAMALQLMREKGMNRSESGQLGFSVLLFQDLAVIPALALVPLLAGSADEHFDWMKIGMKVLEFVGMLIGGRYLLRPVFRFIAASGVREVFTAATLLLVLGSALFMDALGLSMALGTFIAGVLLAESEYRHELETAIDPFKGLLLGLFFISVGMSLNLGVLYTHLLWVVISVVVLVAVKILVLYLLARLYGVRSSERMQFAGVLSQGGEFAFVLFSTASSQRLFQGDQMAPLLMKLVDKWLSRQFNGPEEEDEKPWVNDDKPQVIVVGFGRFGQVIGRLLMANKMRITVLERDISAVNLMRKYGYKVYYGDATQVDLLRSAGAEAAESIVITCNEPEDTMKLVEICQQHFPHLHILARARGRVEAHELLQAGVTQFSRETFSSALELGRKTLVTLGMHPHQAQRAQLHFRRLDMRMLRELIPMHADTVQISRAREARRELEEIFQREMQQERRQLDGWDEFE</sequence>
<keyword id="KW-0050">Antiport</keyword>
<keyword id="KW-0997">Cell inner membrane</keyword>
<keyword id="KW-1003">Cell membrane</keyword>
<keyword id="KW-0406">Ion transport</keyword>
<keyword id="KW-0472">Membrane</keyword>
<keyword id="KW-0630">Potassium</keyword>
<keyword id="KW-0633">Potassium transport</keyword>
<keyword id="KW-1185">Reference proteome</keyword>
<keyword id="KW-0812">Transmembrane</keyword>
<keyword id="KW-1133">Transmembrane helix</keyword>
<keyword id="KW-0813">Transport</keyword>
<evidence type="ECO:0000255" key="1">
    <source>
        <dbReference type="HAMAP-Rule" id="MF_01412"/>
    </source>
</evidence>
<evidence type="ECO:0000255" key="2">
    <source>
        <dbReference type="PROSITE-ProRule" id="PRU00543"/>
    </source>
</evidence>
<evidence type="ECO:0000305" key="3"/>
<accession>Q83PY0</accession>
<name>KEFB_SHIFL</name>
<comment type="function">
    <text evidence="1">Pore-forming subunit of a potassium efflux system that confers protection against electrophiles. Catalyzes K(+)/H(+) antiport.</text>
</comment>
<comment type="subunit">
    <text evidence="1">Interacts with the regulatory subunit KefG.</text>
</comment>
<comment type="subcellular location">
    <subcellularLocation>
        <location evidence="1">Cell inner membrane</location>
        <topology evidence="1">Multi-pass membrane protein</topology>
    </subcellularLocation>
</comment>
<comment type="similarity">
    <text evidence="1">Belongs to the monovalent cation:proton antiporter 2 (CPA2) transporter (TC 2.A.37) family. KefB subfamily.</text>
</comment>
<comment type="caution">
    <text evidence="3">Could be the product of a pseudogene. Is truncated in the N-terminal where it lacks 31 residues compared to orthologs and it has a 13 residues deletion in between Ala-325 and Pro-326.</text>
</comment>
<comment type="sequence caution" evidence="3">
    <conflict type="erroneous initiation">
        <sequence resource="EMBL-CDS" id="AAN44832"/>
    </conflict>
    <text>Truncated N-terminus.</text>
</comment>
<comment type="sequence caution" evidence="3">
    <conflict type="erroneous initiation">
        <sequence resource="EMBL-CDS" id="AAP19346"/>
    </conflict>
    <text>Truncated N-terminus.</text>
</comment>
<gene>
    <name evidence="1" type="primary">kefB</name>
    <name type="ordered locus">SF3369</name>
    <name type="ordered locus">S4394</name>
</gene>
<protein>
    <recommendedName>
        <fullName>Putative glutathione-regulated potassium-efflux system protein KefB</fullName>
    </recommendedName>
    <alternativeName>
        <fullName evidence="1">K(+)/H(+) antiporter</fullName>
    </alternativeName>
</protein>